<organism>
    <name type="scientific">Mus musculus</name>
    <name type="common">Mouse</name>
    <dbReference type="NCBI Taxonomy" id="10090"/>
    <lineage>
        <taxon>Eukaryota</taxon>
        <taxon>Metazoa</taxon>
        <taxon>Chordata</taxon>
        <taxon>Craniata</taxon>
        <taxon>Vertebrata</taxon>
        <taxon>Euteleostomi</taxon>
        <taxon>Mammalia</taxon>
        <taxon>Eutheria</taxon>
        <taxon>Euarchontoglires</taxon>
        <taxon>Glires</taxon>
        <taxon>Rodentia</taxon>
        <taxon>Myomorpha</taxon>
        <taxon>Muroidea</taxon>
        <taxon>Muridae</taxon>
        <taxon>Murinae</taxon>
        <taxon>Mus</taxon>
        <taxon>Mus</taxon>
    </lineage>
</organism>
<sequence length="362" mass="39119">METDAPQPGLASPDSPHDPCKMFIGGLSWQTTQEGLREYFGQFGEVKECLVMRDPLTKRSRGFGFVTFMDQAGVDKVLAQSRHELDSKTIDPKVAFPRRAQPKMVTRTKKIFVGGLSVNTTVEDVKHYFEQFGKVDDAMLMFDKTTNRHRGFGFVTFESEDIVEKVCEIHFHEINNKMVECKKAQPKEVMSPTGSARGRSRVMPYGMDAFMLGIGMLGYPGFQATTYASRSYTGLAPGYTYQFPEFRVERSPLPSAPVLPELTAIPLTAYGPMAAAAAAAAVVRGTGSHPWTMAPPPGSTPSRTGGFLGTTSPGPMAELYGAANQDSGVSSYISAASPAPSTGFGHSLGGPLIATAFTNGYH</sequence>
<accession>Q61474</accession>
<accession>Q8BNC7</accession>
<dbReference type="EMBL" id="D49654">
    <property type="protein sequence ID" value="BAA08530.1"/>
    <property type="molecule type" value="mRNA"/>
</dbReference>
<dbReference type="EMBL" id="AK084019">
    <property type="protein sequence ID" value="BAC39099.1"/>
    <property type="molecule type" value="mRNA"/>
</dbReference>
<dbReference type="CCDS" id="CCDS19591.1">
    <molecule id="Q61474-1"/>
</dbReference>
<dbReference type="RefSeq" id="NP_032655.1">
    <molecule id="Q61474-1"/>
    <property type="nucleotide sequence ID" value="NM_008629.2"/>
</dbReference>
<dbReference type="PDB" id="1UAW">
    <property type="method" value="NMR"/>
    <property type="chains" value="A=20-96"/>
</dbReference>
<dbReference type="PDB" id="2MSS">
    <property type="method" value="NMR"/>
    <property type="chains" value="A=110-184"/>
</dbReference>
<dbReference type="PDB" id="2MST">
    <property type="method" value="NMR"/>
    <property type="chains" value="A=110-184"/>
</dbReference>
<dbReference type="PDB" id="2RS2">
    <property type="method" value="NMR"/>
    <property type="chains" value="A=20-103"/>
</dbReference>
<dbReference type="PDB" id="5X3Y">
    <property type="method" value="NMR"/>
    <property type="chains" value="A=109-200"/>
</dbReference>
<dbReference type="PDB" id="5X3Z">
    <property type="method" value="NMR"/>
    <property type="chains" value="A=109-200"/>
</dbReference>
<dbReference type="PDBsum" id="1UAW"/>
<dbReference type="PDBsum" id="2MSS"/>
<dbReference type="PDBsum" id="2MST"/>
<dbReference type="PDBsum" id="2RS2"/>
<dbReference type="PDBsum" id="5X3Y"/>
<dbReference type="PDBsum" id="5X3Z"/>
<dbReference type="SMR" id="Q61474"/>
<dbReference type="BioGRID" id="201530">
    <property type="interactions" value="2"/>
</dbReference>
<dbReference type="FunCoup" id="Q61474">
    <property type="interactions" value="892"/>
</dbReference>
<dbReference type="IntAct" id="Q61474">
    <property type="interactions" value="4"/>
</dbReference>
<dbReference type="STRING" id="10090.ENSMUSP00000120516"/>
<dbReference type="GlyGen" id="Q61474">
    <property type="glycosylation" value="1 site"/>
</dbReference>
<dbReference type="iPTMnet" id="Q61474"/>
<dbReference type="PhosphoSitePlus" id="Q61474"/>
<dbReference type="PaxDb" id="10090-ENSMUSP00000120516"/>
<dbReference type="PeptideAtlas" id="Q61474"/>
<dbReference type="ProteomicsDB" id="291419">
    <molecule id="Q61474-1"/>
</dbReference>
<dbReference type="ProteomicsDB" id="291420">
    <molecule id="Q61474-2"/>
</dbReference>
<dbReference type="Antibodypedia" id="18945">
    <property type="antibodies" value="667 antibodies from 41 providers"/>
</dbReference>
<dbReference type="DNASU" id="17690"/>
<dbReference type="Ensembl" id="ENSMUST00000150779.8">
    <molecule id="Q61474-1"/>
    <property type="protein sequence ID" value="ENSMUSP00000120516.2"/>
    <property type="gene ID" value="ENSMUSG00000054256.12"/>
</dbReference>
<dbReference type="GeneID" id="17690"/>
<dbReference type="KEGG" id="mmu:17690"/>
<dbReference type="UCSC" id="uc008zdu.1">
    <molecule id="Q61474-2"/>
    <property type="organism name" value="mouse"/>
</dbReference>
<dbReference type="UCSC" id="uc008zdv.1">
    <molecule id="Q61474-1"/>
    <property type="organism name" value="mouse"/>
</dbReference>
<dbReference type="AGR" id="MGI:107376"/>
<dbReference type="CTD" id="4440"/>
<dbReference type="MGI" id="MGI:107376">
    <property type="gene designation" value="Msi1"/>
</dbReference>
<dbReference type="VEuPathDB" id="HostDB:ENSMUSG00000054256"/>
<dbReference type="eggNOG" id="KOG4205">
    <property type="taxonomic scope" value="Eukaryota"/>
</dbReference>
<dbReference type="GeneTree" id="ENSGT00940000156515"/>
<dbReference type="InParanoid" id="Q61474"/>
<dbReference type="OMA" id="GINARRE"/>
<dbReference type="OrthoDB" id="1875751at2759"/>
<dbReference type="PhylomeDB" id="Q61474"/>
<dbReference type="TreeFam" id="TF325419"/>
<dbReference type="BioGRID-ORCS" id="17690">
    <property type="hits" value="1 hit in 79 CRISPR screens"/>
</dbReference>
<dbReference type="ChiTaRS" id="Msi1">
    <property type="organism name" value="mouse"/>
</dbReference>
<dbReference type="EvolutionaryTrace" id="Q61474"/>
<dbReference type="PRO" id="PR:Q61474"/>
<dbReference type="Proteomes" id="UP000000589">
    <property type="component" value="Chromosome 5"/>
</dbReference>
<dbReference type="RNAct" id="Q61474">
    <property type="molecule type" value="protein"/>
</dbReference>
<dbReference type="Bgee" id="ENSMUSG00000054256">
    <property type="expression patterns" value="Expressed in retinal neural layer and 180 other cell types or tissues"/>
</dbReference>
<dbReference type="ExpressionAtlas" id="Q61474">
    <property type="expression patterns" value="baseline and differential"/>
</dbReference>
<dbReference type="GO" id="GO:0005737">
    <property type="term" value="C:cytoplasm"/>
    <property type="evidence" value="ECO:0000314"/>
    <property type="project" value="MGI"/>
</dbReference>
<dbReference type="GO" id="GO:0005829">
    <property type="term" value="C:cytosol"/>
    <property type="evidence" value="ECO:0000304"/>
    <property type="project" value="Reactome"/>
</dbReference>
<dbReference type="GO" id="GO:0005634">
    <property type="term" value="C:nucleus"/>
    <property type="evidence" value="ECO:0000314"/>
    <property type="project" value="MGI"/>
</dbReference>
<dbReference type="GO" id="GO:0042802">
    <property type="term" value="F:identical protein binding"/>
    <property type="evidence" value="ECO:0000353"/>
    <property type="project" value="IntAct"/>
</dbReference>
<dbReference type="GO" id="GO:0140693">
    <property type="term" value="F:molecular condensate scaffold activity"/>
    <property type="evidence" value="ECO:0000314"/>
    <property type="project" value="DisProt"/>
</dbReference>
<dbReference type="GO" id="GO:0008266">
    <property type="term" value="F:poly(U) RNA binding"/>
    <property type="evidence" value="ECO:0000314"/>
    <property type="project" value="MGI"/>
</dbReference>
<dbReference type="GO" id="GO:0042803">
    <property type="term" value="F:protein homodimerization activity"/>
    <property type="evidence" value="ECO:0000314"/>
    <property type="project" value="DisProt"/>
</dbReference>
<dbReference type="GO" id="GO:0003727">
    <property type="term" value="F:single-stranded RNA binding"/>
    <property type="evidence" value="ECO:0000314"/>
    <property type="project" value="MGI"/>
</dbReference>
<dbReference type="GO" id="GO:0030855">
    <property type="term" value="P:epithelial cell differentiation"/>
    <property type="evidence" value="ECO:0007669"/>
    <property type="project" value="Ensembl"/>
</dbReference>
<dbReference type="GO" id="GO:0009725">
    <property type="term" value="P:response to hormone"/>
    <property type="evidence" value="ECO:0007669"/>
    <property type="project" value="Ensembl"/>
</dbReference>
<dbReference type="CDD" id="cd12576">
    <property type="entry name" value="RRM1_MSI"/>
    <property type="match status" value="1"/>
</dbReference>
<dbReference type="CDD" id="cd12323">
    <property type="entry name" value="RRM2_MSI"/>
    <property type="match status" value="1"/>
</dbReference>
<dbReference type="FunFam" id="3.30.70.330:FF:000596">
    <property type="entry name" value="RNA-binding protein Musashi homolog 1"/>
    <property type="match status" value="1"/>
</dbReference>
<dbReference type="FunFam" id="3.30.70.330:FF:000020">
    <property type="entry name" value="RNA-binding protein Musashi homolog 2 isoform X1"/>
    <property type="match status" value="1"/>
</dbReference>
<dbReference type="Gene3D" id="3.30.70.330">
    <property type="match status" value="2"/>
</dbReference>
<dbReference type="InterPro" id="IPR034126">
    <property type="entry name" value="MSI_RRM2"/>
</dbReference>
<dbReference type="InterPro" id="IPR012677">
    <property type="entry name" value="Nucleotide-bd_a/b_plait_sf"/>
</dbReference>
<dbReference type="InterPro" id="IPR035979">
    <property type="entry name" value="RBD_domain_sf"/>
</dbReference>
<dbReference type="InterPro" id="IPR000504">
    <property type="entry name" value="RRM_dom"/>
</dbReference>
<dbReference type="PANTHER" id="PTHR48032:SF3">
    <property type="entry name" value="RNA-BINDING PROTEIN MUSASHI HOMOLOG 1"/>
    <property type="match status" value="1"/>
</dbReference>
<dbReference type="PANTHER" id="PTHR48032">
    <property type="entry name" value="RNA-BINDING PROTEIN MUSASHI HOMOLOG RBP6"/>
    <property type="match status" value="1"/>
</dbReference>
<dbReference type="Pfam" id="PF00076">
    <property type="entry name" value="RRM_1"/>
    <property type="match status" value="2"/>
</dbReference>
<dbReference type="SMART" id="SM00360">
    <property type="entry name" value="RRM"/>
    <property type="match status" value="2"/>
</dbReference>
<dbReference type="SUPFAM" id="SSF54928">
    <property type="entry name" value="RNA-binding domain, RBD"/>
    <property type="match status" value="2"/>
</dbReference>
<dbReference type="PROSITE" id="PS50102">
    <property type="entry name" value="RRM"/>
    <property type="match status" value="2"/>
</dbReference>
<keyword id="KW-0002">3D-structure</keyword>
<keyword id="KW-0007">Acetylation</keyword>
<keyword id="KW-0025">Alternative splicing</keyword>
<keyword id="KW-0963">Cytoplasm</keyword>
<keyword id="KW-0539">Nucleus</keyword>
<keyword id="KW-0597">Phosphoprotein</keyword>
<keyword id="KW-1185">Reference proteome</keyword>
<keyword id="KW-0677">Repeat</keyword>
<keyword id="KW-0694">RNA-binding</keyword>
<reference key="1">
    <citation type="journal article" date="1996" name="Dev. Biol.">
        <title>Mouse-Musashi-1, a neural RNA-binding protein highly enriched in the mammalian CNS stem cell.</title>
        <authorList>
            <person name="Sakakibara S."/>
            <person name="Imai T."/>
            <person name="Hamaguchi K."/>
            <person name="Okabe M."/>
            <person name="Aruga J."/>
            <person name="Nakajima K."/>
            <person name="Yasutomi D."/>
            <person name="Nagata T."/>
            <person name="Kurihara Y."/>
            <person name="Uesugi S."/>
            <person name="Miyata T."/>
            <person name="Ogawa M."/>
            <person name="Mikoshiba K."/>
            <person name="Okano H."/>
        </authorList>
    </citation>
    <scope>NUCLEOTIDE SEQUENCE [MRNA] (ISOFORM 1)</scope>
    <scope>RNA-BINDING</scope>
    <scope>TISSUE SPECIFICITY</scope>
    <source>
        <strain>ICR</strain>
        <tissue>Cerebellum</tissue>
    </source>
</reference>
<reference key="2">
    <citation type="journal article" date="2005" name="Science">
        <title>The transcriptional landscape of the mammalian genome.</title>
        <authorList>
            <person name="Carninci P."/>
            <person name="Kasukawa T."/>
            <person name="Katayama S."/>
            <person name="Gough J."/>
            <person name="Frith M.C."/>
            <person name="Maeda N."/>
            <person name="Oyama R."/>
            <person name="Ravasi T."/>
            <person name="Lenhard B."/>
            <person name="Wells C."/>
            <person name="Kodzius R."/>
            <person name="Shimokawa K."/>
            <person name="Bajic V.B."/>
            <person name="Brenner S.E."/>
            <person name="Batalov S."/>
            <person name="Forrest A.R."/>
            <person name="Zavolan M."/>
            <person name="Davis M.J."/>
            <person name="Wilming L.G."/>
            <person name="Aidinis V."/>
            <person name="Allen J.E."/>
            <person name="Ambesi-Impiombato A."/>
            <person name="Apweiler R."/>
            <person name="Aturaliya R.N."/>
            <person name="Bailey T.L."/>
            <person name="Bansal M."/>
            <person name="Baxter L."/>
            <person name="Beisel K.W."/>
            <person name="Bersano T."/>
            <person name="Bono H."/>
            <person name="Chalk A.M."/>
            <person name="Chiu K.P."/>
            <person name="Choudhary V."/>
            <person name="Christoffels A."/>
            <person name="Clutterbuck D.R."/>
            <person name="Crowe M.L."/>
            <person name="Dalla E."/>
            <person name="Dalrymple B.P."/>
            <person name="de Bono B."/>
            <person name="Della Gatta G."/>
            <person name="di Bernardo D."/>
            <person name="Down T."/>
            <person name="Engstrom P."/>
            <person name="Fagiolini M."/>
            <person name="Faulkner G."/>
            <person name="Fletcher C.F."/>
            <person name="Fukushima T."/>
            <person name="Furuno M."/>
            <person name="Futaki S."/>
            <person name="Gariboldi M."/>
            <person name="Georgii-Hemming P."/>
            <person name="Gingeras T.R."/>
            <person name="Gojobori T."/>
            <person name="Green R.E."/>
            <person name="Gustincich S."/>
            <person name="Harbers M."/>
            <person name="Hayashi Y."/>
            <person name="Hensch T.K."/>
            <person name="Hirokawa N."/>
            <person name="Hill D."/>
            <person name="Huminiecki L."/>
            <person name="Iacono M."/>
            <person name="Ikeo K."/>
            <person name="Iwama A."/>
            <person name="Ishikawa T."/>
            <person name="Jakt M."/>
            <person name="Kanapin A."/>
            <person name="Katoh M."/>
            <person name="Kawasawa Y."/>
            <person name="Kelso J."/>
            <person name="Kitamura H."/>
            <person name="Kitano H."/>
            <person name="Kollias G."/>
            <person name="Krishnan S.P."/>
            <person name="Kruger A."/>
            <person name="Kummerfeld S.K."/>
            <person name="Kurochkin I.V."/>
            <person name="Lareau L.F."/>
            <person name="Lazarevic D."/>
            <person name="Lipovich L."/>
            <person name="Liu J."/>
            <person name="Liuni S."/>
            <person name="McWilliam S."/>
            <person name="Madan Babu M."/>
            <person name="Madera M."/>
            <person name="Marchionni L."/>
            <person name="Matsuda H."/>
            <person name="Matsuzawa S."/>
            <person name="Miki H."/>
            <person name="Mignone F."/>
            <person name="Miyake S."/>
            <person name="Morris K."/>
            <person name="Mottagui-Tabar S."/>
            <person name="Mulder N."/>
            <person name="Nakano N."/>
            <person name="Nakauchi H."/>
            <person name="Ng P."/>
            <person name="Nilsson R."/>
            <person name="Nishiguchi S."/>
            <person name="Nishikawa S."/>
            <person name="Nori F."/>
            <person name="Ohara O."/>
            <person name="Okazaki Y."/>
            <person name="Orlando V."/>
            <person name="Pang K.C."/>
            <person name="Pavan W.J."/>
            <person name="Pavesi G."/>
            <person name="Pesole G."/>
            <person name="Petrovsky N."/>
            <person name="Piazza S."/>
            <person name="Reed J."/>
            <person name="Reid J.F."/>
            <person name="Ring B.Z."/>
            <person name="Ringwald M."/>
            <person name="Rost B."/>
            <person name="Ruan Y."/>
            <person name="Salzberg S.L."/>
            <person name="Sandelin A."/>
            <person name="Schneider C."/>
            <person name="Schoenbach C."/>
            <person name="Sekiguchi K."/>
            <person name="Semple C.A."/>
            <person name="Seno S."/>
            <person name="Sessa L."/>
            <person name="Sheng Y."/>
            <person name="Shibata Y."/>
            <person name="Shimada H."/>
            <person name="Shimada K."/>
            <person name="Silva D."/>
            <person name="Sinclair B."/>
            <person name="Sperling S."/>
            <person name="Stupka E."/>
            <person name="Sugiura K."/>
            <person name="Sultana R."/>
            <person name="Takenaka Y."/>
            <person name="Taki K."/>
            <person name="Tammoja K."/>
            <person name="Tan S.L."/>
            <person name="Tang S."/>
            <person name="Taylor M.S."/>
            <person name="Tegner J."/>
            <person name="Teichmann S.A."/>
            <person name="Ueda H.R."/>
            <person name="van Nimwegen E."/>
            <person name="Verardo R."/>
            <person name="Wei C.L."/>
            <person name="Yagi K."/>
            <person name="Yamanishi H."/>
            <person name="Zabarovsky E."/>
            <person name="Zhu S."/>
            <person name="Zimmer A."/>
            <person name="Hide W."/>
            <person name="Bult C."/>
            <person name="Grimmond S.M."/>
            <person name="Teasdale R.D."/>
            <person name="Liu E.T."/>
            <person name="Brusic V."/>
            <person name="Quackenbush J."/>
            <person name="Wahlestedt C."/>
            <person name="Mattick J.S."/>
            <person name="Hume D.A."/>
            <person name="Kai C."/>
            <person name="Sasaki D."/>
            <person name="Tomaru Y."/>
            <person name="Fukuda S."/>
            <person name="Kanamori-Katayama M."/>
            <person name="Suzuki M."/>
            <person name="Aoki J."/>
            <person name="Arakawa T."/>
            <person name="Iida J."/>
            <person name="Imamura K."/>
            <person name="Itoh M."/>
            <person name="Kato T."/>
            <person name="Kawaji H."/>
            <person name="Kawagashira N."/>
            <person name="Kawashima T."/>
            <person name="Kojima M."/>
            <person name="Kondo S."/>
            <person name="Konno H."/>
            <person name="Nakano K."/>
            <person name="Ninomiya N."/>
            <person name="Nishio T."/>
            <person name="Okada M."/>
            <person name="Plessy C."/>
            <person name="Shibata K."/>
            <person name="Shiraki T."/>
            <person name="Suzuki S."/>
            <person name="Tagami M."/>
            <person name="Waki K."/>
            <person name="Watahiki A."/>
            <person name="Okamura-Oho Y."/>
            <person name="Suzuki H."/>
            <person name="Kawai J."/>
            <person name="Hayashizaki Y."/>
        </authorList>
    </citation>
    <scope>NUCLEOTIDE SEQUENCE [LARGE SCALE MRNA] (ISOFORM 2)</scope>
    <source>
        <strain>C57BL/6J</strain>
        <tissue>Spinal ganglion</tissue>
    </source>
</reference>
<reference key="3">
    <citation type="journal article" date="2001" name="Mol. Cell. Biol.">
        <title>The neural RNA-binding protein Musashi1 translationally regulates mammalian numb gene expression by interacting with its mRNA.</title>
        <authorList>
            <person name="Imai T."/>
            <person name="Tokunaga A."/>
            <person name="Yoshida T."/>
            <person name="Hashimoto M."/>
            <person name="Mikoshiba K."/>
            <person name="Weinmaster G."/>
            <person name="Nakafuku M."/>
            <person name="Okano H."/>
        </authorList>
    </citation>
    <scope>FUNCTION</scope>
    <scope>MUTAGENESIS OF PHE-63; PHE-65 AND PHE-68</scope>
</reference>
<reference key="4">
    <citation type="journal article" date="2002" name="Proc. Natl. Acad. Sci. U.S.A.">
        <title>RNA-binding protein Musashi family: roles for CNS stem cells and a subpopulation of ependymal cells revealed by targeted disruption and antisense ablation.</title>
        <authorList>
            <person name="Sakakibara S."/>
            <person name="Nakamura Y."/>
            <person name="Yoshida T."/>
            <person name="Shibata S."/>
            <person name="Koike M."/>
            <person name="Takano H."/>
            <person name="Ueda S."/>
            <person name="Uchiyama Y."/>
            <person name="Noda T."/>
            <person name="Okano H."/>
        </authorList>
    </citation>
    <scope>FUNCTION</scope>
</reference>
<reference key="5">
    <citation type="journal article" date="2006" name="J. Cell Sci.">
        <title>A role for the ELAV RNA-binding proteins in neural stem cells: stabilization of Msi1 mRNA.</title>
        <authorList>
            <person name="Ratti A."/>
            <person name="Fallini C."/>
            <person name="Cova L."/>
            <person name="Fantozzi R."/>
            <person name="Calzarossa C."/>
            <person name="Zennaro E."/>
            <person name="Pascale A."/>
            <person name="Quattrone A."/>
            <person name="Silani V."/>
        </authorList>
    </citation>
    <scope>SUBCELLULAR LOCATION</scope>
    <scope>TISSUE SPECIFICITY</scope>
</reference>
<reference key="6">
    <citation type="journal article" date="2010" name="Cell">
        <title>A tissue-specific atlas of mouse protein phosphorylation and expression.</title>
        <authorList>
            <person name="Huttlin E.L."/>
            <person name="Jedrychowski M.P."/>
            <person name="Elias J.E."/>
            <person name="Goswami T."/>
            <person name="Rad R."/>
            <person name="Beausoleil S.A."/>
            <person name="Villen J."/>
            <person name="Haas W."/>
            <person name="Sowa M.E."/>
            <person name="Gygi S.P."/>
        </authorList>
    </citation>
    <scope>IDENTIFICATION BY MASS SPECTROMETRY [LARGE SCALE ANALYSIS]</scope>
    <source>
        <tissue>Testis</tissue>
    </source>
</reference>
<reference key="7">
    <citation type="journal article" date="1999" name="J. Mol. Biol.">
        <title>Structure, backbone dynamics and interactions with RNA of the C-terminal RNA-binding domain of a mouse neural RNA-binding protein, Musashi1.</title>
        <authorList>
            <person name="Nagata T."/>
            <person name="Kanno R."/>
            <person name="Kurihara Y."/>
            <person name="Uesugi S."/>
            <person name="Imai T."/>
            <person name="Sakakibara S."/>
            <person name="Okano H."/>
            <person name="Katahira M."/>
        </authorList>
    </citation>
    <scope>STRUCTURE BY NMR OF 110-184</scope>
    <scope>INTERACTION WITH RNA</scope>
</reference>
<reference key="8">
    <citation type="journal article" date="2003" name="J. Biol. Chem.">
        <title>Origin of higher affinity to RNA of the N-terminal RNA-binding domain than that of the C-terminal one of a mouse neural protein, musashi1, as revealed by comparison of their structures, modes of interaction, surface electrostatic potentials, and backbone dynamics.</title>
        <authorList>
            <person name="Miyanoiri Y."/>
            <person name="Kobayashi H."/>
            <person name="Imai T."/>
            <person name="Watanabe M."/>
            <person name="Nagata T."/>
            <person name="Uesugi S."/>
            <person name="Okano H."/>
            <person name="Katahira M."/>
        </authorList>
    </citation>
    <scope>STRUCTURE BY NMR OF 20-96</scope>
    <scope>INTERACTION WITH RNA</scope>
</reference>
<name>MSI1H_MOUSE</name>
<comment type="function">
    <text evidence="3 4">RNA binding protein that regulates the expression of target mRNAs at the translation level. Regulates expression of the NOTCH1 antagonist NUMB. Binds RNA containing the sequence 5'-GUUAGUUAGUUAGUU-3' and other sequences containing the pattern 5'-[GA]U(1-3)AGU-3'. May play a role in the proliferation and maintenance of stem cells in the central nervous system.</text>
</comment>
<comment type="interaction">
    <interactant intactId="EBI-8327453">
        <id>Q61474</id>
    </interactant>
    <interactant intactId="EBI-8327453">
        <id>Q61474</id>
        <label>Msi1</label>
    </interactant>
    <organismsDiffer>false</organismsDiffer>
    <experiments>2</experiments>
</comment>
<comment type="subcellular location">
    <subcellularLocation>
        <location evidence="5">Cytoplasm</location>
    </subcellularLocation>
    <subcellularLocation>
        <location evidence="5">Nucleus</location>
    </subcellularLocation>
</comment>
<comment type="alternative products">
    <event type="alternative splicing"/>
    <isoform>
        <id>Q61474-1</id>
        <name>1</name>
        <sequence type="displayed"/>
    </isoform>
    <isoform>
        <id>Q61474-2</id>
        <name>2</name>
        <sequence type="described" ref="VSP_011166 VSP_011167"/>
    </isoform>
</comment>
<comment type="tissue specificity">
    <text evidence="5 6">Expressed in neural stem and progenitor cells (at protein level) (PubMed:16554442). Detected in olfactory bulb, brain stem, small intestine, and at low levels in brain cortex, hippocampus and ovary (PubMed:8660864). Detected in neural progenitor cells, including neural stem cells (PubMed:8660864).</text>
</comment>
<comment type="developmental stage">
    <text>Highly expressed in embryonic brain at day 12. Expressed at intermediate levels during the rest of embryonic development and in newborns up to day 3. After this expression decreases and stabilizes at low levels of expression around day 13.</text>
</comment>
<comment type="domain">
    <text>The first RNA recognition motif binds more strongly to RNA compared to the second one.</text>
</comment>
<comment type="similarity">
    <text evidence="8">Belongs to the Musashi family.</text>
</comment>
<proteinExistence type="evidence at protein level"/>
<protein>
    <recommendedName>
        <fullName>RNA-binding protein Musashi homolog 1</fullName>
        <shortName>Musashi-1</shortName>
    </recommendedName>
</protein>
<feature type="chain" id="PRO_0000081650" description="RNA-binding protein Musashi homolog 1">
    <location>
        <begin position="1"/>
        <end position="362"/>
    </location>
</feature>
<feature type="domain" description="RRM 1" evidence="2">
    <location>
        <begin position="20"/>
        <end position="110"/>
    </location>
</feature>
<feature type="domain" description="RRM 2" evidence="2">
    <location>
        <begin position="109"/>
        <end position="186"/>
    </location>
</feature>
<feature type="modified residue" description="N-acetylmethionine" evidence="1">
    <location>
        <position position="1"/>
    </location>
</feature>
<feature type="modified residue" description="Phosphoserine" evidence="1">
    <location>
        <position position="191"/>
    </location>
</feature>
<feature type="splice variant" id="VSP_011166" description="In isoform 2." evidence="7">
    <location>
        <begin position="1"/>
        <end position="21"/>
    </location>
</feature>
<feature type="splice variant" id="VSP_011167" description="In isoform 2." evidence="7">
    <original>AIPLTAYGPMAAAAAAAAVVRGTGSHPWTMAPPPGSTPSRTGGFLGTTSPGPMAELYGAANQDSGVSSYISAASPAPSTGFGHSLGGPLIATAFTNGYH</original>
    <variation>GQWLRFRASHRPRGEKGGERDCPLPRGEAGRTTVPGHWPVSSATWPSRVGREAKPGRRR</variation>
    <location>
        <begin position="264"/>
        <end position="362"/>
    </location>
</feature>
<feature type="mutagenesis site" description="Abolishes RNA binding; when associated with L-65 and L-68." evidence="3">
    <original>F</original>
    <variation>L</variation>
    <location>
        <position position="63"/>
    </location>
</feature>
<feature type="mutagenesis site" description="Abolishes RNA binding; when associated with L-63 and L-68." evidence="3">
    <original>F</original>
    <variation>L</variation>
    <location>
        <position position="65"/>
    </location>
</feature>
<feature type="mutagenesis site" description="Abolishes RNA binding; when associated with L-63 and L-65." evidence="3">
    <original>F</original>
    <variation>L</variation>
    <location>
        <position position="68"/>
    </location>
</feature>
<feature type="strand" evidence="9">
    <location>
        <begin position="22"/>
        <end position="26"/>
    </location>
</feature>
<feature type="helix" evidence="9">
    <location>
        <begin position="34"/>
        <end position="40"/>
    </location>
</feature>
<feature type="turn" evidence="9">
    <location>
        <begin position="41"/>
        <end position="43"/>
    </location>
</feature>
<feature type="strand" evidence="9">
    <location>
        <begin position="49"/>
        <end position="52"/>
    </location>
</feature>
<feature type="strand" evidence="9">
    <location>
        <begin position="57"/>
        <end position="59"/>
    </location>
</feature>
<feature type="strand" evidence="9">
    <location>
        <begin position="61"/>
        <end position="66"/>
    </location>
</feature>
<feature type="helix" evidence="9">
    <location>
        <begin position="73"/>
        <end position="79"/>
    </location>
</feature>
<feature type="turn" evidence="9">
    <location>
        <begin position="80"/>
        <end position="82"/>
    </location>
</feature>
<feature type="strand" evidence="11">
    <location>
        <begin position="83"/>
        <end position="85"/>
    </location>
</feature>
<feature type="strand" evidence="9">
    <location>
        <begin position="91"/>
        <end position="94"/>
    </location>
</feature>
<feature type="strand" evidence="10">
    <location>
        <begin position="111"/>
        <end position="114"/>
    </location>
</feature>
<feature type="helix" evidence="10">
    <location>
        <begin position="122"/>
        <end position="130"/>
    </location>
</feature>
<feature type="strand" evidence="10">
    <location>
        <begin position="136"/>
        <end position="138"/>
    </location>
</feature>
<feature type="strand" evidence="10">
    <location>
        <begin position="144"/>
        <end position="146"/>
    </location>
</feature>
<feature type="strand" evidence="10">
    <location>
        <begin position="151"/>
        <end position="156"/>
    </location>
</feature>
<feature type="helix" evidence="10">
    <location>
        <begin position="160"/>
        <end position="167"/>
    </location>
</feature>
<feature type="strand" evidence="10">
    <location>
        <begin position="168"/>
        <end position="170"/>
    </location>
</feature>
<feature type="strand" evidence="10">
    <location>
        <begin position="174"/>
        <end position="176"/>
    </location>
</feature>
<feature type="strand" evidence="10">
    <location>
        <begin position="180"/>
        <end position="182"/>
    </location>
</feature>
<feature type="helix" evidence="12">
    <location>
        <begin position="188"/>
        <end position="190"/>
    </location>
</feature>
<feature type="turn" evidence="12">
    <location>
        <begin position="192"/>
        <end position="197"/>
    </location>
</feature>
<gene>
    <name type="primary">Msi1</name>
    <name type="synonym">Msi1h</name>
</gene>
<evidence type="ECO:0000250" key="1">
    <source>
        <dbReference type="UniProtKB" id="O43347"/>
    </source>
</evidence>
<evidence type="ECO:0000255" key="2">
    <source>
        <dbReference type="PROSITE-ProRule" id="PRU00176"/>
    </source>
</evidence>
<evidence type="ECO:0000269" key="3">
    <source>
    </source>
</evidence>
<evidence type="ECO:0000269" key="4">
    <source>
    </source>
</evidence>
<evidence type="ECO:0000269" key="5">
    <source>
    </source>
</evidence>
<evidence type="ECO:0000269" key="6">
    <source>
    </source>
</evidence>
<evidence type="ECO:0000303" key="7">
    <source>
    </source>
</evidence>
<evidence type="ECO:0000305" key="8"/>
<evidence type="ECO:0007829" key="9">
    <source>
        <dbReference type="PDB" id="1UAW"/>
    </source>
</evidence>
<evidence type="ECO:0007829" key="10">
    <source>
        <dbReference type="PDB" id="2MSS"/>
    </source>
</evidence>
<evidence type="ECO:0007829" key="11">
    <source>
        <dbReference type="PDB" id="2RS2"/>
    </source>
</evidence>
<evidence type="ECO:0007829" key="12">
    <source>
        <dbReference type="PDB" id="5X3Z"/>
    </source>
</evidence>